<feature type="chain" id="PRO_0000272089" description="Lipoprotein-releasing system ATP-binding protein LolD">
    <location>
        <begin position="1"/>
        <end position="225"/>
    </location>
</feature>
<feature type="domain" description="ABC transporter" evidence="1">
    <location>
        <begin position="5"/>
        <end position="225"/>
    </location>
</feature>
<feature type="binding site" evidence="1">
    <location>
        <begin position="41"/>
        <end position="48"/>
    </location>
    <ligand>
        <name>ATP</name>
        <dbReference type="ChEBI" id="CHEBI:30616"/>
    </ligand>
</feature>
<organism>
    <name type="scientific">Geobacter metallireducens (strain ATCC 53774 / DSM 7210 / GS-15)</name>
    <dbReference type="NCBI Taxonomy" id="269799"/>
    <lineage>
        <taxon>Bacteria</taxon>
        <taxon>Pseudomonadati</taxon>
        <taxon>Thermodesulfobacteriota</taxon>
        <taxon>Desulfuromonadia</taxon>
        <taxon>Geobacterales</taxon>
        <taxon>Geobacteraceae</taxon>
        <taxon>Geobacter</taxon>
    </lineage>
</organism>
<gene>
    <name evidence="1" type="primary">lolD</name>
    <name type="ordered locus">Gmet_2358</name>
</gene>
<protein>
    <recommendedName>
        <fullName evidence="1">Lipoprotein-releasing system ATP-binding protein LolD</fullName>
        <ecNumber evidence="1">7.6.2.-</ecNumber>
    </recommendedName>
</protein>
<dbReference type="EC" id="7.6.2.-" evidence="1"/>
<dbReference type="EMBL" id="CP000148">
    <property type="protein sequence ID" value="ABB32583.1"/>
    <property type="molecule type" value="Genomic_DNA"/>
</dbReference>
<dbReference type="RefSeq" id="WP_004513262.1">
    <property type="nucleotide sequence ID" value="NC_007517.1"/>
</dbReference>
<dbReference type="SMR" id="Q39T41"/>
<dbReference type="STRING" id="269799.Gmet_2358"/>
<dbReference type="KEGG" id="gme:Gmet_2358"/>
<dbReference type="eggNOG" id="COG1136">
    <property type="taxonomic scope" value="Bacteria"/>
</dbReference>
<dbReference type="HOGENOM" id="CLU_000604_1_22_7"/>
<dbReference type="Proteomes" id="UP000007073">
    <property type="component" value="Chromosome"/>
</dbReference>
<dbReference type="GO" id="GO:0005886">
    <property type="term" value="C:plasma membrane"/>
    <property type="evidence" value="ECO:0007669"/>
    <property type="project" value="UniProtKB-SubCell"/>
</dbReference>
<dbReference type="GO" id="GO:0005524">
    <property type="term" value="F:ATP binding"/>
    <property type="evidence" value="ECO:0007669"/>
    <property type="project" value="UniProtKB-KW"/>
</dbReference>
<dbReference type="GO" id="GO:0016887">
    <property type="term" value="F:ATP hydrolysis activity"/>
    <property type="evidence" value="ECO:0007669"/>
    <property type="project" value="InterPro"/>
</dbReference>
<dbReference type="GO" id="GO:0022857">
    <property type="term" value="F:transmembrane transporter activity"/>
    <property type="evidence" value="ECO:0007669"/>
    <property type="project" value="TreeGrafter"/>
</dbReference>
<dbReference type="GO" id="GO:0044874">
    <property type="term" value="P:lipoprotein localization to outer membrane"/>
    <property type="evidence" value="ECO:0007669"/>
    <property type="project" value="TreeGrafter"/>
</dbReference>
<dbReference type="GO" id="GO:0089705">
    <property type="term" value="P:protein localization to outer membrane"/>
    <property type="evidence" value="ECO:0007669"/>
    <property type="project" value="TreeGrafter"/>
</dbReference>
<dbReference type="CDD" id="cd03255">
    <property type="entry name" value="ABC_MJ0796_LolCDE_FtsE"/>
    <property type="match status" value="1"/>
</dbReference>
<dbReference type="FunFam" id="3.40.50.300:FF:000230">
    <property type="entry name" value="Lipoprotein-releasing system ATP-binding protein LolD"/>
    <property type="match status" value="1"/>
</dbReference>
<dbReference type="Gene3D" id="3.40.50.300">
    <property type="entry name" value="P-loop containing nucleotide triphosphate hydrolases"/>
    <property type="match status" value="1"/>
</dbReference>
<dbReference type="InterPro" id="IPR003593">
    <property type="entry name" value="AAA+_ATPase"/>
</dbReference>
<dbReference type="InterPro" id="IPR003439">
    <property type="entry name" value="ABC_transporter-like_ATP-bd"/>
</dbReference>
<dbReference type="InterPro" id="IPR017871">
    <property type="entry name" value="ABC_transporter-like_CS"/>
</dbReference>
<dbReference type="InterPro" id="IPR015854">
    <property type="entry name" value="ABC_transpr_LolD-like"/>
</dbReference>
<dbReference type="InterPro" id="IPR017911">
    <property type="entry name" value="MacB-like_ATP-bd"/>
</dbReference>
<dbReference type="InterPro" id="IPR027417">
    <property type="entry name" value="P-loop_NTPase"/>
</dbReference>
<dbReference type="PANTHER" id="PTHR24220">
    <property type="entry name" value="IMPORT ATP-BINDING PROTEIN"/>
    <property type="match status" value="1"/>
</dbReference>
<dbReference type="PANTHER" id="PTHR24220:SF689">
    <property type="entry name" value="LIPOPROTEIN-RELEASING SYSTEM ATP-BINDING PROTEIN LOLD"/>
    <property type="match status" value="1"/>
</dbReference>
<dbReference type="Pfam" id="PF00005">
    <property type="entry name" value="ABC_tran"/>
    <property type="match status" value="1"/>
</dbReference>
<dbReference type="SMART" id="SM00382">
    <property type="entry name" value="AAA"/>
    <property type="match status" value="1"/>
</dbReference>
<dbReference type="SUPFAM" id="SSF52540">
    <property type="entry name" value="P-loop containing nucleoside triphosphate hydrolases"/>
    <property type="match status" value="1"/>
</dbReference>
<dbReference type="PROSITE" id="PS00211">
    <property type="entry name" value="ABC_TRANSPORTER_1"/>
    <property type="match status" value="1"/>
</dbReference>
<dbReference type="PROSITE" id="PS50893">
    <property type="entry name" value="ABC_TRANSPORTER_2"/>
    <property type="match status" value="1"/>
</dbReference>
<dbReference type="PROSITE" id="PS51244">
    <property type="entry name" value="LOLD"/>
    <property type="match status" value="1"/>
</dbReference>
<keyword id="KW-0067">ATP-binding</keyword>
<keyword id="KW-0997">Cell inner membrane</keyword>
<keyword id="KW-1003">Cell membrane</keyword>
<keyword id="KW-0472">Membrane</keyword>
<keyword id="KW-0547">Nucleotide-binding</keyword>
<keyword id="KW-1185">Reference proteome</keyword>
<keyword id="KW-1278">Translocase</keyword>
<keyword id="KW-0813">Transport</keyword>
<name>LOLD_GEOMG</name>
<comment type="function">
    <text evidence="1">Part of the ABC transporter complex LolCDE involved in the translocation of mature outer membrane-directed lipoproteins, from the inner membrane to the periplasmic chaperone, LolA. Responsible for the formation of the LolA-lipoprotein complex in an ATP-dependent manner.</text>
</comment>
<comment type="subunit">
    <text evidence="1">The complex is composed of two ATP-binding proteins (LolD) and two transmembrane proteins (LolC and LolE).</text>
</comment>
<comment type="subcellular location">
    <subcellularLocation>
        <location evidence="1">Cell inner membrane</location>
        <topology evidence="1">Peripheral membrane protein</topology>
    </subcellularLocation>
</comment>
<comment type="similarity">
    <text evidence="1">Belongs to the ABC transporter superfamily. Lipoprotein translocase (TC 3.A.1.125) family.</text>
</comment>
<accession>Q39T41</accession>
<reference key="1">
    <citation type="journal article" date="2009" name="BMC Microbiol.">
        <title>The genome sequence of Geobacter metallireducens: features of metabolism, physiology and regulation common and dissimilar to Geobacter sulfurreducens.</title>
        <authorList>
            <person name="Aklujkar M."/>
            <person name="Krushkal J."/>
            <person name="DiBartolo G."/>
            <person name="Lapidus A."/>
            <person name="Land M.L."/>
            <person name="Lovley D.R."/>
        </authorList>
    </citation>
    <scope>NUCLEOTIDE SEQUENCE [LARGE SCALE GENOMIC DNA]</scope>
    <source>
        <strain>ATCC 53774 / DSM 7210 / GS-15</strain>
    </source>
</reference>
<sequence>MSSLLEVMDLTKGYGSGETRVDVLKGINLTVAEGETIALVGASGTGKSTLLHIMGTLDRPTSGSVRFGGEDVFRLGDAALASFRNHSIGFVFQFHHLLPEFTALENVMMPLLIAGVKRSDAAAPARELLGEVGLAHRLTHKPGELSGGEQQRVAIARALVLSPKLLLADEPTGNLDMKTSDEVHETLERVHRKRGVTLVIVTHNEKLASYMGRTVRLVDGRVVAD</sequence>
<evidence type="ECO:0000255" key="1">
    <source>
        <dbReference type="HAMAP-Rule" id="MF_01708"/>
    </source>
</evidence>
<proteinExistence type="inferred from homology"/>